<dbReference type="EMBL" id="AP002047">
    <property type="protein sequence ID" value="BAB03143.1"/>
    <property type="status" value="ALT_SEQ"/>
    <property type="molecule type" value="Genomic_DNA"/>
</dbReference>
<dbReference type="EMBL" id="AC069474">
    <property type="protein sequence ID" value="AAG51006.1"/>
    <property type="status" value="ALT_SEQ"/>
    <property type="molecule type" value="Genomic_DNA"/>
</dbReference>
<dbReference type="EMBL" id="CP002686">
    <property type="protein sequence ID" value="AEE75186.1"/>
    <property type="molecule type" value="Genomic_DNA"/>
</dbReference>
<dbReference type="EMBL" id="BT001925">
    <property type="protein sequence ID" value="AAN71924.1"/>
    <property type="molecule type" value="mRNA"/>
</dbReference>
<dbReference type="EMBL" id="AY086584">
    <property type="protein sequence ID" value="AAM63646.1"/>
    <property type="molecule type" value="mRNA"/>
</dbReference>
<dbReference type="RefSeq" id="NP_566421.1">
    <molecule id="Q84WW1-1"/>
    <property type="nucleotide sequence ID" value="NM_112070.4"/>
</dbReference>
<dbReference type="BioGRID" id="5747">
    <property type="interactions" value="3"/>
</dbReference>
<dbReference type="FunCoup" id="Q84WW1">
    <property type="interactions" value="2189"/>
</dbReference>
<dbReference type="IntAct" id="Q84WW1">
    <property type="interactions" value="3"/>
</dbReference>
<dbReference type="STRING" id="3702.Q84WW1"/>
<dbReference type="GlyGen" id="Q84WW1">
    <property type="glycosylation" value="1 site"/>
</dbReference>
<dbReference type="PaxDb" id="3702-AT3G12350.1"/>
<dbReference type="ProteomicsDB" id="231015">
    <molecule id="Q84WW1-1"/>
</dbReference>
<dbReference type="EnsemblPlants" id="AT3G12350.1">
    <molecule id="Q84WW1-1"/>
    <property type="protein sequence ID" value="AT3G12350.1"/>
    <property type="gene ID" value="AT3G12350"/>
</dbReference>
<dbReference type="GeneID" id="820413"/>
<dbReference type="Gramene" id="AT3G12350.1">
    <molecule id="Q84WW1-1"/>
    <property type="protein sequence ID" value="AT3G12350.1"/>
    <property type="gene ID" value="AT3G12350"/>
</dbReference>
<dbReference type="KEGG" id="ath:AT3G12350"/>
<dbReference type="Araport" id="AT3G12350"/>
<dbReference type="TAIR" id="AT3G12350"/>
<dbReference type="eggNOG" id="ENOG502QTTY">
    <property type="taxonomic scope" value="Eukaryota"/>
</dbReference>
<dbReference type="HOGENOM" id="CLU_651088_0_0_1"/>
<dbReference type="InParanoid" id="Q84WW1"/>
<dbReference type="OMA" id="KLWFSLC"/>
<dbReference type="PhylomeDB" id="Q84WW1"/>
<dbReference type="PRO" id="PR:Q84WW1"/>
<dbReference type="Proteomes" id="UP000006548">
    <property type="component" value="Chromosome 3"/>
</dbReference>
<dbReference type="ExpressionAtlas" id="Q84WW1">
    <property type="expression patterns" value="baseline and differential"/>
</dbReference>
<dbReference type="Gene3D" id="1.20.1280.50">
    <property type="match status" value="1"/>
</dbReference>
<dbReference type="InterPro" id="IPR036047">
    <property type="entry name" value="F-box-like_dom_sf"/>
</dbReference>
<dbReference type="InterPro" id="IPR001810">
    <property type="entry name" value="F-box_dom"/>
</dbReference>
<dbReference type="Pfam" id="PF12937">
    <property type="entry name" value="F-box-like"/>
    <property type="match status" value="1"/>
</dbReference>
<dbReference type="SUPFAM" id="SSF81383">
    <property type="entry name" value="F-box domain"/>
    <property type="match status" value="1"/>
</dbReference>
<dbReference type="PROSITE" id="PS50181">
    <property type="entry name" value="FBOX"/>
    <property type="match status" value="1"/>
</dbReference>
<organism>
    <name type="scientific">Arabidopsis thaliana</name>
    <name type="common">Mouse-ear cress</name>
    <dbReference type="NCBI Taxonomy" id="3702"/>
    <lineage>
        <taxon>Eukaryota</taxon>
        <taxon>Viridiplantae</taxon>
        <taxon>Streptophyta</taxon>
        <taxon>Embryophyta</taxon>
        <taxon>Tracheophyta</taxon>
        <taxon>Spermatophyta</taxon>
        <taxon>Magnoliopsida</taxon>
        <taxon>eudicotyledons</taxon>
        <taxon>Gunneridae</taxon>
        <taxon>Pentapetalae</taxon>
        <taxon>rosids</taxon>
        <taxon>malvids</taxon>
        <taxon>Brassicales</taxon>
        <taxon>Brassicaceae</taxon>
        <taxon>Camelineae</taxon>
        <taxon>Arabidopsis</taxon>
    </lineage>
</organism>
<reference key="1">
    <citation type="journal article" date="2000" name="DNA Res.">
        <title>Structural analysis of Arabidopsis thaliana chromosome 3. II. Sequence features of the 4,251,695 bp regions covered by 90 P1, TAC and BAC clones.</title>
        <authorList>
            <person name="Kaneko T."/>
            <person name="Katoh T."/>
            <person name="Sato S."/>
            <person name="Nakamura Y."/>
            <person name="Asamizu E."/>
            <person name="Tabata S."/>
        </authorList>
    </citation>
    <scope>NUCLEOTIDE SEQUENCE [LARGE SCALE GENOMIC DNA]</scope>
    <source>
        <strain>cv. Columbia</strain>
    </source>
</reference>
<reference key="2">
    <citation type="journal article" date="2000" name="Nature">
        <title>Sequence and analysis of chromosome 3 of the plant Arabidopsis thaliana.</title>
        <authorList>
            <person name="Salanoubat M."/>
            <person name="Lemcke K."/>
            <person name="Rieger M."/>
            <person name="Ansorge W."/>
            <person name="Unseld M."/>
            <person name="Fartmann B."/>
            <person name="Valle G."/>
            <person name="Bloecker H."/>
            <person name="Perez-Alonso M."/>
            <person name="Obermaier B."/>
            <person name="Delseny M."/>
            <person name="Boutry M."/>
            <person name="Grivell L.A."/>
            <person name="Mache R."/>
            <person name="Puigdomenech P."/>
            <person name="De Simone V."/>
            <person name="Choisne N."/>
            <person name="Artiguenave F."/>
            <person name="Robert C."/>
            <person name="Brottier P."/>
            <person name="Wincker P."/>
            <person name="Cattolico L."/>
            <person name="Weissenbach J."/>
            <person name="Saurin W."/>
            <person name="Quetier F."/>
            <person name="Schaefer M."/>
            <person name="Mueller-Auer S."/>
            <person name="Gabel C."/>
            <person name="Fuchs M."/>
            <person name="Benes V."/>
            <person name="Wurmbach E."/>
            <person name="Drzonek H."/>
            <person name="Erfle H."/>
            <person name="Jordan N."/>
            <person name="Bangert S."/>
            <person name="Wiedelmann R."/>
            <person name="Kranz H."/>
            <person name="Voss H."/>
            <person name="Holland R."/>
            <person name="Brandt P."/>
            <person name="Nyakatura G."/>
            <person name="Vezzi A."/>
            <person name="D'Angelo M."/>
            <person name="Pallavicini A."/>
            <person name="Toppo S."/>
            <person name="Simionati B."/>
            <person name="Conrad A."/>
            <person name="Hornischer K."/>
            <person name="Kauer G."/>
            <person name="Loehnert T.-H."/>
            <person name="Nordsiek G."/>
            <person name="Reichelt J."/>
            <person name="Scharfe M."/>
            <person name="Schoen O."/>
            <person name="Bargues M."/>
            <person name="Terol J."/>
            <person name="Climent J."/>
            <person name="Navarro P."/>
            <person name="Collado C."/>
            <person name="Perez-Perez A."/>
            <person name="Ottenwaelder B."/>
            <person name="Duchemin D."/>
            <person name="Cooke R."/>
            <person name="Laudie M."/>
            <person name="Berger-Llauro C."/>
            <person name="Purnelle B."/>
            <person name="Masuy D."/>
            <person name="de Haan M."/>
            <person name="Maarse A.C."/>
            <person name="Alcaraz J.-P."/>
            <person name="Cottet A."/>
            <person name="Casacuberta E."/>
            <person name="Monfort A."/>
            <person name="Argiriou A."/>
            <person name="Flores M."/>
            <person name="Liguori R."/>
            <person name="Vitale D."/>
            <person name="Mannhaupt G."/>
            <person name="Haase D."/>
            <person name="Schoof H."/>
            <person name="Rudd S."/>
            <person name="Zaccaria P."/>
            <person name="Mewes H.-W."/>
            <person name="Mayer K.F.X."/>
            <person name="Kaul S."/>
            <person name="Town C.D."/>
            <person name="Koo H.L."/>
            <person name="Tallon L.J."/>
            <person name="Jenkins J."/>
            <person name="Rooney T."/>
            <person name="Rizzo M."/>
            <person name="Walts A."/>
            <person name="Utterback T."/>
            <person name="Fujii C.Y."/>
            <person name="Shea T.P."/>
            <person name="Creasy T.H."/>
            <person name="Haas B."/>
            <person name="Maiti R."/>
            <person name="Wu D."/>
            <person name="Peterson J."/>
            <person name="Van Aken S."/>
            <person name="Pai G."/>
            <person name="Militscher J."/>
            <person name="Sellers P."/>
            <person name="Gill J.E."/>
            <person name="Feldblyum T.V."/>
            <person name="Preuss D."/>
            <person name="Lin X."/>
            <person name="Nierman W.C."/>
            <person name="Salzberg S.L."/>
            <person name="White O."/>
            <person name="Venter J.C."/>
            <person name="Fraser C.M."/>
            <person name="Kaneko T."/>
            <person name="Nakamura Y."/>
            <person name="Sato S."/>
            <person name="Kato T."/>
            <person name="Asamizu E."/>
            <person name="Sasamoto S."/>
            <person name="Kimura T."/>
            <person name="Idesawa K."/>
            <person name="Kawashima K."/>
            <person name="Kishida Y."/>
            <person name="Kiyokawa C."/>
            <person name="Kohara M."/>
            <person name="Matsumoto M."/>
            <person name="Matsuno A."/>
            <person name="Muraki A."/>
            <person name="Nakayama S."/>
            <person name="Nakazaki N."/>
            <person name="Shinpo S."/>
            <person name="Takeuchi C."/>
            <person name="Wada T."/>
            <person name="Watanabe A."/>
            <person name="Yamada M."/>
            <person name="Yasuda M."/>
            <person name="Tabata S."/>
        </authorList>
    </citation>
    <scope>NUCLEOTIDE SEQUENCE [LARGE SCALE GENOMIC DNA]</scope>
    <source>
        <strain>cv. Columbia</strain>
    </source>
</reference>
<reference key="3">
    <citation type="journal article" date="2017" name="Plant J.">
        <title>Araport11: a complete reannotation of the Arabidopsis thaliana reference genome.</title>
        <authorList>
            <person name="Cheng C.Y."/>
            <person name="Krishnakumar V."/>
            <person name="Chan A.P."/>
            <person name="Thibaud-Nissen F."/>
            <person name="Schobel S."/>
            <person name="Town C.D."/>
        </authorList>
    </citation>
    <scope>GENOME REANNOTATION</scope>
    <source>
        <strain>cv. Columbia</strain>
    </source>
</reference>
<reference key="4">
    <citation type="journal article" date="2003" name="Science">
        <title>Empirical analysis of transcriptional activity in the Arabidopsis genome.</title>
        <authorList>
            <person name="Yamada K."/>
            <person name="Lim J."/>
            <person name="Dale J.M."/>
            <person name="Chen H."/>
            <person name="Shinn P."/>
            <person name="Palm C.J."/>
            <person name="Southwick A.M."/>
            <person name="Wu H.C."/>
            <person name="Kim C.J."/>
            <person name="Nguyen M."/>
            <person name="Pham P.K."/>
            <person name="Cheuk R.F."/>
            <person name="Karlin-Newmann G."/>
            <person name="Liu S.X."/>
            <person name="Lam B."/>
            <person name="Sakano H."/>
            <person name="Wu T."/>
            <person name="Yu G."/>
            <person name="Miranda M."/>
            <person name="Quach H.L."/>
            <person name="Tripp M."/>
            <person name="Chang C.H."/>
            <person name="Lee J.M."/>
            <person name="Toriumi M.J."/>
            <person name="Chan M.M."/>
            <person name="Tang C.C."/>
            <person name="Onodera C.S."/>
            <person name="Deng J.M."/>
            <person name="Akiyama K."/>
            <person name="Ansari Y."/>
            <person name="Arakawa T."/>
            <person name="Banh J."/>
            <person name="Banno F."/>
            <person name="Bowser L."/>
            <person name="Brooks S.Y."/>
            <person name="Carninci P."/>
            <person name="Chao Q."/>
            <person name="Choy N."/>
            <person name="Enju A."/>
            <person name="Goldsmith A.D."/>
            <person name="Gurjal M."/>
            <person name="Hansen N.F."/>
            <person name="Hayashizaki Y."/>
            <person name="Johnson-Hopson C."/>
            <person name="Hsuan V.W."/>
            <person name="Iida K."/>
            <person name="Karnes M."/>
            <person name="Khan S."/>
            <person name="Koesema E."/>
            <person name="Ishida J."/>
            <person name="Jiang P.X."/>
            <person name="Jones T."/>
            <person name="Kawai J."/>
            <person name="Kamiya A."/>
            <person name="Meyers C."/>
            <person name="Nakajima M."/>
            <person name="Narusaka M."/>
            <person name="Seki M."/>
            <person name="Sakurai T."/>
            <person name="Satou M."/>
            <person name="Tamse R."/>
            <person name="Vaysberg M."/>
            <person name="Wallender E.K."/>
            <person name="Wong C."/>
            <person name="Yamamura Y."/>
            <person name="Yuan S."/>
            <person name="Shinozaki K."/>
            <person name="Davis R.W."/>
            <person name="Theologis A."/>
            <person name="Ecker J.R."/>
        </authorList>
    </citation>
    <scope>NUCLEOTIDE SEQUENCE [LARGE SCALE MRNA]</scope>
    <source>
        <strain>cv. Columbia</strain>
    </source>
</reference>
<reference key="5">
    <citation type="submission" date="2002-03" db="EMBL/GenBank/DDBJ databases">
        <title>Full-length cDNA from Arabidopsis thaliana.</title>
        <authorList>
            <person name="Brover V.V."/>
            <person name="Troukhan M.E."/>
            <person name="Alexandrov N.A."/>
            <person name="Lu Y.-P."/>
            <person name="Flavell R.B."/>
            <person name="Feldmann K.A."/>
        </authorList>
    </citation>
    <scope>NUCLEOTIDE SEQUENCE [LARGE SCALE MRNA]</scope>
</reference>
<name>FB140_ARATH</name>
<sequence length="422" mass="47756">MATFALPFCEIPEDLQLRILSLLTPAEISSFACTSKRFASLCQEDGKIWHVMCDQRWGKKTKIQKWANGQIPYRHLYKTLKGLENLIGFWRLCGRANPAASSPPLVFFDWGSSFILGSRVLSTGDDTYEVKKTPFLLMGISPEGRSENFLDLVGGNLRSVDDDLKELEASNNLVSVDVNFMGNGHIMVEENRCFTNNNRREDQRSSGDESDDLISSPNFSEMYTQLANKTSPGGDRRRQKRKEKERQASRTKWEPEHFLKVADCSPTPTRPLQGLWKGFCEGSIELYLVKYDEVGGIICRKVEDLSLSRYTPPVFWTPKHTFIRSPFSAEEELLLNSRIHISPFAEVHENVVSGMLYMKSSCDLVLPGEPGNGIGFLRGEGRVWLYDNGTFGFGFLRDQFIIDLKRVALEDGCLADEVEACM</sequence>
<comment type="alternative products">
    <event type="alternative splicing"/>
    <isoform>
        <id>Q84WW1-1</id>
        <name>1</name>
        <sequence type="displayed"/>
    </isoform>
    <text>A number of isoforms are produced. According to EST sequences.</text>
</comment>
<comment type="sequence caution" evidence="3">
    <conflict type="erroneous gene model prediction">
        <sequence resource="EMBL-CDS" id="AAG51006"/>
    </conflict>
</comment>
<comment type="sequence caution" evidence="3">
    <conflict type="erroneous gene model prediction">
        <sequence resource="EMBL-CDS" id="BAB03143"/>
    </conflict>
    <text>The predicted gene At3g12350 has been split into 2 genes: At3g12350 and At3g12360.</text>
</comment>
<evidence type="ECO:0000255" key="1">
    <source>
        <dbReference type="PROSITE-ProRule" id="PRU00080"/>
    </source>
</evidence>
<evidence type="ECO:0000256" key="2">
    <source>
        <dbReference type="SAM" id="MobiDB-lite"/>
    </source>
</evidence>
<evidence type="ECO:0000305" key="3"/>
<gene>
    <name type="ordered locus">At3g12350</name>
    <name type="ORF">MQC3.17</name>
    <name type="ORF">T2E22.32</name>
</gene>
<feature type="chain" id="PRO_0000274951" description="F-box protein At3g12350">
    <location>
        <begin position="1"/>
        <end position="422"/>
    </location>
</feature>
<feature type="domain" description="F-box" evidence="1">
    <location>
        <begin position="5"/>
        <end position="52"/>
    </location>
</feature>
<feature type="region of interest" description="Disordered" evidence="2">
    <location>
        <begin position="197"/>
        <end position="216"/>
    </location>
</feature>
<feature type="region of interest" description="Disordered" evidence="2">
    <location>
        <begin position="226"/>
        <end position="252"/>
    </location>
</feature>
<feature type="compositionally biased region" description="Basic and acidic residues" evidence="2">
    <location>
        <begin position="197"/>
        <end position="207"/>
    </location>
</feature>
<feature type="compositionally biased region" description="Basic and acidic residues" evidence="2">
    <location>
        <begin position="242"/>
        <end position="252"/>
    </location>
</feature>
<feature type="sequence conflict" description="In Ref. 5; AAM63646." evidence="3" ref="5">
    <original>G</original>
    <variation>C</variation>
    <location>
        <position position="274"/>
    </location>
</feature>
<feature type="sequence conflict" description="In Ref. 5; AAM63646." evidence="3" ref="5">
    <original>I</original>
    <variation>M</variation>
    <location>
        <position position="284"/>
    </location>
</feature>
<protein>
    <recommendedName>
        <fullName>F-box protein At3g12350</fullName>
    </recommendedName>
</protein>
<proteinExistence type="evidence at transcript level"/>
<keyword id="KW-0025">Alternative splicing</keyword>
<keyword id="KW-1185">Reference proteome</keyword>
<accession>Q84WW1</accession>
<accession>Q8LCI5</accession>
<accession>Q9C7A1</accession>
<accession>Q9LHH2</accession>